<gene>
    <name type="primary">mt-cyb</name>
    <name type="synonym">cob</name>
    <name type="synonym">cytb</name>
    <name type="synonym">mtcyb</name>
</gene>
<keyword id="KW-0249">Electron transport</keyword>
<keyword id="KW-0349">Heme</keyword>
<keyword id="KW-0408">Iron</keyword>
<keyword id="KW-0472">Membrane</keyword>
<keyword id="KW-0479">Metal-binding</keyword>
<keyword id="KW-0496">Mitochondrion</keyword>
<keyword id="KW-0999">Mitochondrion inner membrane</keyword>
<keyword id="KW-0679">Respiratory chain</keyword>
<keyword id="KW-0812">Transmembrane</keyword>
<keyword id="KW-1133">Transmembrane helix</keyword>
<keyword id="KW-0813">Transport</keyword>
<keyword id="KW-0830">Ubiquinone</keyword>
<reference key="1">
    <citation type="submission" date="2002-01" db="EMBL/GenBank/DDBJ databases">
        <title>The mitochondrion cytochrome b DNA sequence of Clarias fuscus.</title>
        <authorList>
            <person name="Luo J."/>
            <person name="Bai J."/>
            <person name="Lao H."/>
            <person name="Ye X."/>
            <person name="Jian Q."/>
        </authorList>
    </citation>
    <scope>NUCLEOTIDE SEQUENCE [GENOMIC DNA]</scope>
</reference>
<comment type="function">
    <text evidence="2">Component of the ubiquinol-cytochrome c reductase complex (complex III or cytochrome b-c1 complex) that is part of the mitochondrial respiratory chain. The b-c1 complex mediates electron transfer from ubiquinol to cytochrome c. Contributes to the generation of a proton gradient across the mitochondrial membrane that is then used for ATP synthesis.</text>
</comment>
<comment type="cofactor">
    <cofactor evidence="2">
        <name>heme b</name>
        <dbReference type="ChEBI" id="CHEBI:60344"/>
    </cofactor>
    <text evidence="2">Binds 2 heme b groups non-covalently.</text>
</comment>
<comment type="subunit">
    <text evidence="2">The cytochrome bc1 complex contains 3 respiratory subunits (MT-CYB, CYC1 and UQCRFS1), 2 core proteins (UQCRC1 and UQCRC2) and probably 6 low-molecular weight proteins.</text>
</comment>
<comment type="subcellular location">
    <subcellularLocation>
        <location evidence="2">Mitochondrion inner membrane</location>
        <topology evidence="2">Multi-pass membrane protein</topology>
    </subcellularLocation>
</comment>
<comment type="miscellaneous">
    <text evidence="1">Heme 1 (or BL or b562) is low-potential and absorbs at about 562 nm, and heme 2 (or BH or b566) is high-potential and absorbs at about 566 nm.</text>
</comment>
<comment type="similarity">
    <text evidence="3 4">Belongs to the cytochrome b family.</text>
</comment>
<comment type="caution">
    <text evidence="2">The full-length protein contains only eight transmembrane helices, not nine as predicted by bioinformatics tools.</text>
</comment>
<proteinExistence type="inferred from homology"/>
<protein>
    <recommendedName>
        <fullName>Cytochrome b</fullName>
    </recommendedName>
    <alternativeName>
        <fullName>Complex III subunit 3</fullName>
    </alternativeName>
    <alternativeName>
        <fullName>Complex III subunit III</fullName>
    </alternativeName>
    <alternativeName>
        <fullName>Cytochrome b-c1 complex subunit 3</fullName>
    </alternativeName>
    <alternativeName>
        <fullName>Ubiquinol-cytochrome-c reductase complex cytochrome b subunit</fullName>
    </alternativeName>
</protein>
<feature type="chain" id="PRO_0000060792" description="Cytochrome b">
    <location>
        <begin position="1"/>
        <end position="392"/>
    </location>
</feature>
<feature type="transmembrane region" description="Helical" evidence="2">
    <location>
        <begin position="33"/>
        <end position="53"/>
    </location>
</feature>
<feature type="transmembrane region" description="Helical" evidence="2">
    <location>
        <begin position="77"/>
        <end position="98"/>
    </location>
</feature>
<feature type="transmembrane region" description="Helical" evidence="2">
    <location>
        <begin position="113"/>
        <end position="133"/>
    </location>
</feature>
<feature type="transmembrane region" description="Helical" evidence="2">
    <location>
        <begin position="178"/>
        <end position="198"/>
    </location>
</feature>
<feature type="transmembrane region" description="Helical" evidence="2">
    <location>
        <begin position="226"/>
        <end position="246"/>
    </location>
</feature>
<feature type="transmembrane region" description="Helical" evidence="2">
    <location>
        <begin position="288"/>
        <end position="308"/>
    </location>
</feature>
<feature type="transmembrane region" description="Helical" evidence="2">
    <location>
        <begin position="320"/>
        <end position="340"/>
    </location>
</feature>
<feature type="transmembrane region" description="Helical" evidence="2">
    <location>
        <begin position="347"/>
        <end position="367"/>
    </location>
</feature>
<feature type="binding site" description="axial binding residue" evidence="2">
    <location>
        <position position="83"/>
    </location>
    <ligand>
        <name>heme b</name>
        <dbReference type="ChEBI" id="CHEBI:60344"/>
        <label>b562</label>
    </ligand>
    <ligandPart>
        <name>Fe</name>
        <dbReference type="ChEBI" id="CHEBI:18248"/>
    </ligandPart>
</feature>
<feature type="binding site" description="axial binding residue" evidence="2">
    <location>
        <position position="97"/>
    </location>
    <ligand>
        <name>heme b</name>
        <dbReference type="ChEBI" id="CHEBI:60344"/>
        <label>b566</label>
    </ligand>
    <ligandPart>
        <name>Fe</name>
        <dbReference type="ChEBI" id="CHEBI:18248"/>
    </ligandPart>
</feature>
<feature type="binding site" description="axial binding residue" evidence="2">
    <location>
        <position position="182"/>
    </location>
    <ligand>
        <name>heme b</name>
        <dbReference type="ChEBI" id="CHEBI:60344"/>
        <label>b562</label>
    </ligand>
    <ligandPart>
        <name>Fe</name>
        <dbReference type="ChEBI" id="CHEBI:18248"/>
    </ligandPart>
</feature>
<feature type="binding site" description="axial binding residue" evidence="2">
    <location>
        <position position="196"/>
    </location>
    <ligand>
        <name>heme b</name>
        <dbReference type="ChEBI" id="CHEBI:60344"/>
        <label>b566</label>
    </ligand>
    <ligandPart>
        <name>Fe</name>
        <dbReference type="ChEBI" id="CHEBI:18248"/>
    </ligandPart>
</feature>
<feature type="binding site" evidence="2">
    <location>
        <position position="201"/>
    </location>
    <ligand>
        <name>a ubiquinone</name>
        <dbReference type="ChEBI" id="CHEBI:16389"/>
    </ligand>
</feature>
<name>CYB_CLAFC</name>
<dbReference type="EMBL" id="AF475157">
    <property type="protein sequence ID" value="AAL86888.1"/>
    <property type="molecule type" value="Genomic_DNA"/>
</dbReference>
<dbReference type="SMR" id="Q8SGQ9"/>
<dbReference type="GO" id="GO:0005743">
    <property type="term" value="C:mitochondrial inner membrane"/>
    <property type="evidence" value="ECO:0007669"/>
    <property type="project" value="UniProtKB-SubCell"/>
</dbReference>
<dbReference type="GO" id="GO:0045275">
    <property type="term" value="C:respiratory chain complex III"/>
    <property type="evidence" value="ECO:0007669"/>
    <property type="project" value="InterPro"/>
</dbReference>
<dbReference type="GO" id="GO:0046872">
    <property type="term" value="F:metal ion binding"/>
    <property type="evidence" value="ECO:0007669"/>
    <property type="project" value="UniProtKB-KW"/>
</dbReference>
<dbReference type="GO" id="GO:0008121">
    <property type="term" value="F:ubiquinol-cytochrome-c reductase activity"/>
    <property type="evidence" value="ECO:0007669"/>
    <property type="project" value="InterPro"/>
</dbReference>
<dbReference type="GO" id="GO:0006122">
    <property type="term" value="P:mitochondrial electron transport, ubiquinol to cytochrome c"/>
    <property type="evidence" value="ECO:0007669"/>
    <property type="project" value="TreeGrafter"/>
</dbReference>
<dbReference type="CDD" id="cd00290">
    <property type="entry name" value="cytochrome_b_C"/>
    <property type="match status" value="1"/>
</dbReference>
<dbReference type="CDD" id="cd00284">
    <property type="entry name" value="Cytochrome_b_N"/>
    <property type="match status" value="1"/>
</dbReference>
<dbReference type="FunFam" id="1.20.810.10:FF:000002">
    <property type="entry name" value="Cytochrome b"/>
    <property type="match status" value="1"/>
</dbReference>
<dbReference type="Gene3D" id="1.20.810.10">
    <property type="entry name" value="Cytochrome Bc1 Complex, Chain C"/>
    <property type="match status" value="1"/>
</dbReference>
<dbReference type="InterPro" id="IPR005798">
    <property type="entry name" value="Cyt_b/b6_C"/>
</dbReference>
<dbReference type="InterPro" id="IPR036150">
    <property type="entry name" value="Cyt_b/b6_C_sf"/>
</dbReference>
<dbReference type="InterPro" id="IPR005797">
    <property type="entry name" value="Cyt_b/b6_N"/>
</dbReference>
<dbReference type="InterPro" id="IPR027387">
    <property type="entry name" value="Cytb/b6-like_sf"/>
</dbReference>
<dbReference type="InterPro" id="IPR030689">
    <property type="entry name" value="Cytochrome_b"/>
</dbReference>
<dbReference type="InterPro" id="IPR048260">
    <property type="entry name" value="Cytochrome_b_C_euk/bac"/>
</dbReference>
<dbReference type="InterPro" id="IPR048259">
    <property type="entry name" value="Cytochrome_b_N_euk/bac"/>
</dbReference>
<dbReference type="InterPro" id="IPR016174">
    <property type="entry name" value="Di-haem_cyt_TM"/>
</dbReference>
<dbReference type="PANTHER" id="PTHR19271">
    <property type="entry name" value="CYTOCHROME B"/>
    <property type="match status" value="1"/>
</dbReference>
<dbReference type="PANTHER" id="PTHR19271:SF16">
    <property type="entry name" value="CYTOCHROME B"/>
    <property type="match status" value="1"/>
</dbReference>
<dbReference type="Pfam" id="PF00032">
    <property type="entry name" value="Cytochrom_B_C"/>
    <property type="match status" value="1"/>
</dbReference>
<dbReference type="Pfam" id="PF00033">
    <property type="entry name" value="Cytochrome_B"/>
    <property type="match status" value="1"/>
</dbReference>
<dbReference type="PIRSF" id="PIRSF038885">
    <property type="entry name" value="COB"/>
    <property type="match status" value="1"/>
</dbReference>
<dbReference type="SUPFAM" id="SSF81648">
    <property type="entry name" value="a domain/subunit of cytochrome bc1 complex (Ubiquinol-cytochrome c reductase)"/>
    <property type="match status" value="1"/>
</dbReference>
<dbReference type="SUPFAM" id="SSF81342">
    <property type="entry name" value="Transmembrane di-heme cytochromes"/>
    <property type="match status" value="1"/>
</dbReference>
<dbReference type="PROSITE" id="PS51003">
    <property type="entry name" value="CYTB_CTER"/>
    <property type="match status" value="1"/>
</dbReference>
<dbReference type="PROSITE" id="PS51002">
    <property type="entry name" value="CYTB_NTER"/>
    <property type="match status" value="1"/>
</dbReference>
<organism>
    <name type="scientific">Clarias fuscus</name>
    <name type="common">Chinese catfish</name>
    <name type="synonym">Macropteronotus fuscus</name>
    <dbReference type="NCBI Taxonomy" id="33541"/>
    <lineage>
        <taxon>Eukaryota</taxon>
        <taxon>Metazoa</taxon>
        <taxon>Chordata</taxon>
        <taxon>Craniata</taxon>
        <taxon>Vertebrata</taxon>
        <taxon>Euteleostomi</taxon>
        <taxon>Actinopterygii</taxon>
        <taxon>Neopterygii</taxon>
        <taxon>Teleostei</taxon>
        <taxon>Ostariophysi</taxon>
        <taxon>Siluriformes</taxon>
        <taxon>Clariidae</taxon>
        <taxon>Clarias</taxon>
    </lineage>
</organism>
<geneLocation type="mitochondrion"/>
<accession>Q8SGQ9</accession>
<evidence type="ECO:0000250" key="1"/>
<evidence type="ECO:0000250" key="2">
    <source>
        <dbReference type="UniProtKB" id="P00157"/>
    </source>
</evidence>
<evidence type="ECO:0000255" key="3">
    <source>
        <dbReference type="PROSITE-ProRule" id="PRU00967"/>
    </source>
</evidence>
<evidence type="ECO:0000255" key="4">
    <source>
        <dbReference type="PROSITE-ProRule" id="PRU00968"/>
    </source>
</evidence>
<sequence length="392" mass="43954">MASLRKTHPLFKIMNDALIDLPAPSNISAWWNFGSLLLLCLMVQIITGLFLAMHYTSDISTAFSSVVHICRDVNYGWVIRNFHANGASFFFICIYLHIGRGLYYGSYLYKETWNIGVVLLLLVMMTAFVGYVLPWGQMSFWGATVITNLLSAVPYMGDTLVQWIWGGFSVDNATLTRFFAFHFLLPFTIIAATILHALFLHETGSNNPIGLNSDADKISFHPYFSYKDLLGFIILLTALMSLSLFSPNFLGDPENFTPANPLVTPPHIKPEWYFLFAYAILRSIPNKLGGVLALLFSILVLMVVPLLHLSKQQGLTFRPLSQILFWTLVADVMILTWIGGMPVEHPFIIIGQIASILYFSLFLILNPLAAWLENKLLNLNCSSSLATKAPVL</sequence>